<proteinExistence type="inferred from homology"/>
<comment type="function">
    <text evidence="1">Tetrapolymerization of the monopyrrole PBG into the hydroxymethylbilane pre-uroporphyrinogen in several discrete steps.</text>
</comment>
<comment type="catalytic activity">
    <reaction evidence="1">
        <text>4 porphobilinogen + H2O = hydroxymethylbilane + 4 NH4(+)</text>
        <dbReference type="Rhea" id="RHEA:13185"/>
        <dbReference type="ChEBI" id="CHEBI:15377"/>
        <dbReference type="ChEBI" id="CHEBI:28938"/>
        <dbReference type="ChEBI" id="CHEBI:57845"/>
        <dbReference type="ChEBI" id="CHEBI:58126"/>
        <dbReference type="EC" id="2.5.1.61"/>
    </reaction>
</comment>
<comment type="cofactor">
    <cofactor evidence="1">
        <name>dipyrromethane</name>
        <dbReference type="ChEBI" id="CHEBI:60342"/>
    </cofactor>
    <text evidence="1">Binds 1 dipyrromethane group covalently.</text>
</comment>
<comment type="pathway">
    <text evidence="1">Porphyrin-containing compound metabolism; protoporphyrin-IX biosynthesis; coproporphyrinogen-III from 5-aminolevulinate: step 2/4.</text>
</comment>
<comment type="miscellaneous">
    <text evidence="1">The porphobilinogen subunits are added to the dipyrromethane group.</text>
</comment>
<comment type="similarity">
    <text evidence="1">Belongs to the HMBS family.</text>
</comment>
<sequence length="294" mass="33819">MRIRIAARGSKLSRIQVMMVENYLHKLGIETEFIEIKTKADLFQNEPLSKLGKGVFEKEVNQAVLDNKADVAVHSMKDILTEISENLEIYAVLPRDPPFDILISRKNLFNLEPNSIIGTSSIRRKNFLTFYRNDLNIKDLRGNIDTRLKKYFEGQYDGIIIAEASIYRLKEQVQYYRLDPHLFTPEANQGIIVVIGRKKDETIKKIFNEINDKDTLEIAIAERKALSIVGGGCHSPIGVYFEKYDKDFHGIISSSFGRKKITIEEYFHNMTPYEAGELLGKRFLEEIKNEGIIP</sequence>
<organism>
    <name type="scientific">Sulfurisphaera tokodaii (strain DSM 16993 / JCM 10545 / NBRC 100140 / 7)</name>
    <name type="common">Sulfolobus tokodaii</name>
    <dbReference type="NCBI Taxonomy" id="273063"/>
    <lineage>
        <taxon>Archaea</taxon>
        <taxon>Thermoproteota</taxon>
        <taxon>Thermoprotei</taxon>
        <taxon>Sulfolobales</taxon>
        <taxon>Sulfolobaceae</taxon>
        <taxon>Sulfurisphaera</taxon>
    </lineage>
</organism>
<protein>
    <recommendedName>
        <fullName evidence="1">Probable porphobilinogen deaminase</fullName>
        <shortName evidence="1">PBG</shortName>
        <ecNumber evidence="1">2.5.1.61</ecNumber>
    </recommendedName>
    <alternativeName>
        <fullName evidence="1">Hydroxymethylbilane synthase</fullName>
        <shortName evidence="1">HMBS</shortName>
    </alternativeName>
    <alternativeName>
        <fullName evidence="1">Pre-uroporphyrinogen synthase</fullName>
    </alternativeName>
</protein>
<keyword id="KW-0627">Porphyrin biosynthesis</keyword>
<keyword id="KW-1185">Reference proteome</keyword>
<keyword id="KW-0808">Transferase</keyword>
<accession>Q976H1</accession>
<accession>F9VMQ3</accession>
<reference key="1">
    <citation type="journal article" date="2001" name="DNA Res.">
        <title>Complete genome sequence of an aerobic thermoacidophilic Crenarchaeon, Sulfolobus tokodaii strain7.</title>
        <authorList>
            <person name="Kawarabayasi Y."/>
            <person name="Hino Y."/>
            <person name="Horikawa H."/>
            <person name="Jin-no K."/>
            <person name="Takahashi M."/>
            <person name="Sekine M."/>
            <person name="Baba S."/>
            <person name="Ankai A."/>
            <person name="Kosugi H."/>
            <person name="Hosoyama A."/>
            <person name="Fukui S."/>
            <person name="Nagai Y."/>
            <person name="Nishijima K."/>
            <person name="Otsuka R."/>
            <person name="Nakazawa H."/>
            <person name="Takamiya M."/>
            <person name="Kato Y."/>
            <person name="Yoshizawa T."/>
            <person name="Tanaka T."/>
            <person name="Kudoh Y."/>
            <person name="Yamazaki J."/>
            <person name="Kushida N."/>
            <person name="Oguchi A."/>
            <person name="Aoki K."/>
            <person name="Masuda S."/>
            <person name="Yanagii M."/>
            <person name="Nishimura M."/>
            <person name="Yamagishi A."/>
            <person name="Oshima T."/>
            <person name="Kikuchi H."/>
        </authorList>
    </citation>
    <scope>NUCLEOTIDE SEQUENCE [LARGE SCALE GENOMIC DNA]</scope>
    <source>
        <strain>DSM 16993 / JCM 10545 / NBRC 100140 / 7</strain>
    </source>
</reference>
<dbReference type="EC" id="2.5.1.61" evidence="1"/>
<dbReference type="EMBL" id="BA000023">
    <property type="protein sequence ID" value="BAK54199.1"/>
    <property type="molecule type" value="Genomic_DNA"/>
</dbReference>
<dbReference type="RefSeq" id="WP_010978158.1">
    <property type="nucleotide sequence ID" value="NC_003106.2"/>
</dbReference>
<dbReference type="SMR" id="Q976H1"/>
<dbReference type="STRING" id="273063.STK_02170"/>
<dbReference type="GeneID" id="95643781"/>
<dbReference type="KEGG" id="sto:STK_02170"/>
<dbReference type="PATRIC" id="fig|273063.9.peg.264"/>
<dbReference type="eggNOG" id="arCOG04299">
    <property type="taxonomic scope" value="Archaea"/>
</dbReference>
<dbReference type="OrthoDB" id="8042at2157"/>
<dbReference type="UniPathway" id="UPA00251">
    <property type="reaction ID" value="UER00319"/>
</dbReference>
<dbReference type="Proteomes" id="UP000001015">
    <property type="component" value="Chromosome"/>
</dbReference>
<dbReference type="GO" id="GO:0005737">
    <property type="term" value="C:cytoplasm"/>
    <property type="evidence" value="ECO:0007669"/>
    <property type="project" value="TreeGrafter"/>
</dbReference>
<dbReference type="GO" id="GO:0004418">
    <property type="term" value="F:hydroxymethylbilane synthase activity"/>
    <property type="evidence" value="ECO:0007669"/>
    <property type="project" value="UniProtKB-UniRule"/>
</dbReference>
<dbReference type="GO" id="GO:0006782">
    <property type="term" value="P:protoporphyrinogen IX biosynthetic process"/>
    <property type="evidence" value="ECO:0007669"/>
    <property type="project" value="UniProtKB-UniRule"/>
</dbReference>
<dbReference type="Gene3D" id="3.40.190.10">
    <property type="entry name" value="Periplasmic binding protein-like II"/>
    <property type="match status" value="2"/>
</dbReference>
<dbReference type="Gene3D" id="3.30.160.40">
    <property type="entry name" value="Porphobilinogen deaminase, C-terminal domain"/>
    <property type="match status" value="1"/>
</dbReference>
<dbReference type="HAMAP" id="MF_00260">
    <property type="entry name" value="Porphobil_deam"/>
    <property type="match status" value="1"/>
</dbReference>
<dbReference type="InterPro" id="IPR000860">
    <property type="entry name" value="HemC"/>
</dbReference>
<dbReference type="InterPro" id="IPR022419">
    <property type="entry name" value="Porphobilin_deaminase_cofac_BS"/>
</dbReference>
<dbReference type="InterPro" id="IPR022417">
    <property type="entry name" value="Porphobilin_deaminase_N"/>
</dbReference>
<dbReference type="InterPro" id="IPR022418">
    <property type="entry name" value="Porphobilinogen_deaminase_C"/>
</dbReference>
<dbReference type="InterPro" id="IPR036803">
    <property type="entry name" value="Porphobilinogen_deaminase_C_sf"/>
</dbReference>
<dbReference type="NCBIfam" id="TIGR00212">
    <property type="entry name" value="hemC"/>
    <property type="match status" value="1"/>
</dbReference>
<dbReference type="PANTHER" id="PTHR11557">
    <property type="entry name" value="PORPHOBILINOGEN DEAMINASE"/>
    <property type="match status" value="1"/>
</dbReference>
<dbReference type="PANTHER" id="PTHR11557:SF0">
    <property type="entry name" value="PORPHOBILINOGEN DEAMINASE"/>
    <property type="match status" value="1"/>
</dbReference>
<dbReference type="Pfam" id="PF01379">
    <property type="entry name" value="Porphobil_deam"/>
    <property type="match status" value="1"/>
</dbReference>
<dbReference type="Pfam" id="PF03900">
    <property type="entry name" value="Porphobil_deamC"/>
    <property type="match status" value="1"/>
</dbReference>
<dbReference type="PIRSF" id="PIRSF001438">
    <property type="entry name" value="4pyrrol_synth_OHMeBilane_synth"/>
    <property type="match status" value="1"/>
</dbReference>
<dbReference type="PRINTS" id="PR00151">
    <property type="entry name" value="PORPHBDMNASE"/>
</dbReference>
<dbReference type="SUPFAM" id="SSF53850">
    <property type="entry name" value="Periplasmic binding protein-like II"/>
    <property type="match status" value="1"/>
</dbReference>
<dbReference type="SUPFAM" id="SSF54782">
    <property type="entry name" value="Porphobilinogen deaminase (hydroxymethylbilane synthase), C-terminal domain"/>
    <property type="match status" value="1"/>
</dbReference>
<dbReference type="PROSITE" id="PS00533">
    <property type="entry name" value="PORPHOBILINOGEN_DEAM"/>
    <property type="match status" value="1"/>
</dbReference>
<evidence type="ECO:0000255" key="1">
    <source>
        <dbReference type="HAMAP-Rule" id="MF_00260"/>
    </source>
</evidence>
<gene>
    <name evidence="1" type="primary">hemC</name>
    <name type="ordered locus">STK_02170</name>
</gene>
<name>HEM3_SULTO</name>
<feature type="chain" id="PRO_0000143031" description="Probable porphobilinogen deaminase">
    <location>
        <begin position="1"/>
        <end position="294"/>
    </location>
</feature>
<feature type="modified residue" description="S-(dipyrrolylmethanemethyl)cysteine" evidence="1">
    <location>
        <position position="233"/>
    </location>
</feature>